<accession>B6ERM6</accession>
<name>Y3705_ALISL</name>
<organism>
    <name type="scientific">Aliivibrio salmonicida (strain LFI1238)</name>
    <name type="common">Vibrio salmonicida (strain LFI1238)</name>
    <dbReference type="NCBI Taxonomy" id="316275"/>
    <lineage>
        <taxon>Bacteria</taxon>
        <taxon>Pseudomonadati</taxon>
        <taxon>Pseudomonadota</taxon>
        <taxon>Gammaproteobacteria</taxon>
        <taxon>Vibrionales</taxon>
        <taxon>Vibrionaceae</taxon>
        <taxon>Aliivibrio</taxon>
    </lineage>
</organism>
<proteinExistence type="inferred from homology"/>
<dbReference type="EMBL" id="FM178380">
    <property type="protein sequence ID" value="CAQ81359.1"/>
    <property type="molecule type" value="Genomic_DNA"/>
</dbReference>
<dbReference type="RefSeq" id="WP_012551927.1">
    <property type="nucleotide sequence ID" value="NC_011313.1"/>
</dbReference>
<dbReference type="SMR" id="B6ERM6"/>
<dbReference type="KEGG" id="vsa:VSAL_II0605"/>
<dbReference type="eggNOG" id="COG3132">
    <property type="taxonomic scope" value="Bacteria"/>
</dbReference>
<dbReference type="HOGENOM" id="CLU_057831_2_0_6"/>
<dbReference type="Proteomes" id="UP000001730">
    <property type="component" value="Chromosome 2"/>
</dbReference>
<dbReference type="Gene3D" id="1.10.10.10">
    <property type="entry name" value="Winged helix-like DNA-binding domain superfamily/Winged helix DNA-binding domain"/>
    <property type="match status" value="2"/>
</dbReference>
<dbReference type="HAMAP" id="MF_01584">
    <property type="entry name" value="UPF0502"/>
    <property type="match status" value="1"/>
</dbReference>
<dbReference type="InterPro" id="IPR007432">
    <property type="entry name" value="DUF480"/>
</dbReference>
<dbReference type="InterPro" id="IPR036388">
    <property type="entry name" value="WH-like_DNA-bd_sf"/>
</dbReference>
<dbReference type="InterPro" id="IPR036390">
    <property type="entry name" value="WH_DNA-bd_sf"/>
</dbReference>
<dbReference type="PANTHER" id="PTHR38768">
    <property type="entry name" value="UPF0502 PROTEIN YCEH"/>
    <property type="match status" value="1"/>
</dbReference>
<dbReference type="PANTHER" id="PTHR38768:SF1">
    <property type="entry name" value="UPF0502 PROTEIN YCEH"/>
    <property type="match status" value="1"/>
</dbReference>
<dbReference type="Pfam" id="PF04337">
    <property type="entry name" value="DUF480"/>
    <property type="match status" value="1"/>
</dbReference>
<dbReference type="SUPFAM" id="SSF46785">
    <property type="entry name" value="Winged helix' DNA-binding domain"/>
    <property type="match status" value="2"/>
</dbReference>
<comment type="similarity">
    <text evidence="1">Belongs to the UPF0502 family.</text>
</comment>
<feature type="chain" id="PRO_1000201231" description="UPF0502 protein VSAL_II0605">
    <location>
        <begin position="1"/>
        <end position="221"/>
    </location>
</feature>
<evidence type="ECO:0000255" key="1">
    <source>
        <dbReference type="HAMAP-Rule" id="MF_01584"/>
    </source>
</evidence>
<sequence length="221" mass="24754">MRIFNQTEIRIIGCLIEKEVTTPEQYPLTLNALTTACNQKSNRDPVTSMSDSDVLDSLNTLVSERVVTDETRGNSRVAKYQHRFCNTEFGSLKLSKQEMAVLCVLFLRGPQTPGELRTRTQRLCEFDNVAEVESVLTTLGLSEASPMVTKLEKEPGKREARYAHLFCGEVINDVTVVDKTNVTNHSNSTENDERITLLESEVAELKAEMAQLTQLVNDLLA</sequence>
<gene>
    <name type="ordered locus">VSAL_II0605</name>
</gene>
<reference key="1">
    <citation type="journal article" date="2008" name="BMC Genomics">
        <title>The genome sequence of the fish pathogen Aliivibrio salmonicida strain LFI1238 shows extensive evidence of gene decay.</title>
        <authorList>
            <person name="Hjerde E."/>
            <person name="Lorentzen M.S."/>
            <person name="Holden M.T."/>
            <person name="Seeger K."/>
            <person name="Paulsen S."/>
            <person name="Bason N."/>
            <person name="Churcher C."/>
            <person name="Harris D."/>
            <person name="Norbertczak H."/>
            <person name="Quail M.A."/>
            <person name="Sanders S."/>
            <person name="Thurston S."/>
            <person name="Parkhill J."/>
            <person name="Willassen N.P."/>
            <person name="Thomson N.R."/>
        </authorList>
    </citation>
    <scope>NUCLEOTIDE SEQUENCE [LARGE SCALE GENOMIC DNA]</scope>
    <source>
        <strain>LFI1238</strain>
    </source>
</reference>
<protein>
    <recommendedName>
        <fullName evidence="1">UPF0502 protein VSAL_II0605</fullName>
    </recommendedName>
</protein>